<comment type="function">
    <text evidence="1">Catalyzes the irreversible transfer of a propylamine group from the amino donor S-adenosylmethioninamine (decarboxy-AdoMet) to putrescine (1,4-diaminobutane) to yield spermidine.</text>
</comment>
<comment type="catalytic activity">
    <reaction evidence="1">
        <text>S-adenosyl 3-(methylsulfanyl)propylamine + putrescine = S-methyl-5'-thioadenosine + spermidine + H(+)</text>
        <dbReference type="Rhea" id="RHEA:12721"/>
        <dbReference type="ChEBI" id="CHEBI:15378"/>
        <dbReference type="ChEBI" id="CHEBI:17509"/>
        <dbReference type="ChEBI" id="CHEBI:57443"/>
        <dbReference type="ChEBI" id="CHEBI:57834"/>
        <dbReference type="ChEBI" id="CHEBI:326268"/>
        <dbReference type="EC" id="2.5.1.16"/>
    </reaction>
</comment>
<comment type="pathway">
    <text evidence="1">Amine and polyamine biosynthesis; spermidine biosynthesis; spermidine from putrescine: step 1/1.</text>
</comment>
<comment type="subunit">
    <text evidence="1">Homodimer or homotetramer.</text>
</comment>
<comment type="subcellular location">
    <subcellularLocation>
        <location evidence="1">Cytoplasm</location>
    </subcellularLocation>
</comment>
<comment type="similarity">
    <text evidence="1">Belongs to the spermidine/spermine synthase family.</text>
</comment>
<feature type="chain" id="PRO_1000099280" description="Polyamine aminopropyltransferase">
    <location>
        <begin position="1"/>
        <end position="288"/>
    </location>
</feature>
<feature type="domain" description="PABS" evidence="1">
    <location>
        <begin position="9"/>
        <end position="238"/>
    </location>
</feature>
<feature type="active site" description="Proton acceptor" evidence="1">
    <location>
        <position position="158"/>
    </location>
</feature>
<feature type="binding site" evidence="1">
    <location>
        <position position="33"/>
    </location>
    <ligand>
        <name>S-methyl-5'-thioadenosine</name>
        <dbReference type="ChEBI" id="CHEBI:17509"/>
    </ligand>
</feature>
<feature type="binding site" evidence="1">
    <location>
        <position position="64"/>
    </location>
    <ligand>
        <name>spermidine</name>
        <dbReference type="ChEBI" id="CHEBI:57834"/>
    </ligand>
</feature>
<feature type="binding site" evidence="1">
    <location>
        <position position="88"/>
    </location>
    <ligand>
        <name>spermidine</name>
        <dbReference type="ChEBI" id="CHEBI:57834"/>
    </ligand>
</feature>
<feature type="binding site" evidence="1">
    <location>
        <position position="108"/>
    </location>
    <ligand>
        <name>S-methyl-5'-thioadenosine</name>
        <dbReference type="ChEBI" id="CHEBI:17509"/>
    </ligand>
</feature>
<feature type="binding site" evidence="1">
    <location>
        <begin position="140"/>
        <end position="141"/>
    </location>
    <ligand>
        <name>S-methyl-5'-thioadenosine</name>
        <dbReference type="ChEBI" id="CHEBI:17509"/>
    </ligand>
</feature>
<feature type="binding site" evidence="1">
    <location>
        <begin position="158"/>
        <end position="161"/>
    </location>
    <ligand>
        <name>spermidine</name>
        <dbReference type="ChEBI" id="CHEBI:57834"/>
    </ligand>
</feature>
<feature type="binding site" evidence="1">
    <location>
        <position position="165"/>
    </location>
    <ligand>
        <name>S-methyl-5'-thioadenosine</name>
        <dbReference type="ChEBI" id="CHEBI:17509"/>
    </ligand>
</feature>
<proteinExistence type="inferred from homology"/>
<organism>
    <name type="scientific">Escherichia coli O157:H7 (strain EC4115 / EHEC)</name>
    <dbReference type="NCBI Taxonomy" id="444450"/>
    <lineage>
        <taxon>Bacteria</taxon>
        <taxon>Pseudomonadati</taxon>
        <taxon>Pseudomonadota</taxon>
        <taxon>Gammaproteobacteria</taxon>
        <taxon>Enterobacterales</taxon>
        <taxon>Enterobacteriaceae</taxon>
        <taxon>Escherichia</taxon>
    </lineage>
</organism>
<keyword id="KW-0963">Cytoplasm</keyword>
<keyword id="KW-0620">Polyamine biosynthesis</keyword>
<keyword id="KW-0745">Spermidine biosynthesis</keyword>
<keyword id="KW-0808">Transferase</keyword>
<name>SPEE_ECO5E</name>
<reference key="1">
    <citation type="journal article" date="2011" name="Proc. Natl. Acad. Sci. U.S.A.">
        <title>Genomic anatomy of Escherichia coli O157:H7 outbreaks.</title>
        <authorList>
            <person name="Eppinger M."/>
            <person name="Mammel M.K."/>
            <person name="Leclerc J.E."/>
            <person name="Ravel J."/>
            <person name="Cebula T.A."/>
        </authorList>
    </citation>
    <scope>NUCLEOTIDE SEQUENCE [LARGE SCALE GENOMIC DNA]</scope>
    <source>
        <strain>EC4115 / EHEC</strain>
    </source>
</reference>
<sequence>MAEKKQWHETLHDQFGQYFAVDNVLYHEKTDHQDLIIFENAAFGRVMALDGVVQTTERDEFIYHEMMTHVPLLAHGHAKHVLIIGGGDGAMLREVTRHKNVESITMVEIDAGVVSFCRQYLPNHNAGSYDDPRFKLVIDDGVNFVNQTSQTFDVIISDCTDPIGPGESLFTSAFYEGCKRCLNPGGIFVAQNGVCFLQQEEAIDSHRKLSHYFSDVGFYQAAIPTYYGGIMTFAWATDNDALRHLSTEIIQARFLASGLKCRYYNPAVHTAAFALPQYLQDALASQPS</sequence>
<accession>B5YZF6</accession>
<dbReference type="EC" id="2.5.1.16" evidence="1"/>
<dbReference type="EMBL" id="CP001164">
    <property type="protein sequence ID" value="ACI34654.1"/>
    <property type="molecule type" value="Genomic_DNA"/>
</dbReference>
<dbReference type="RefSeq" id="WP_000818414.1">
    <property type="nucleotide sequence ID" value="NC_011353.1"/>
</dbReference>
<dbReference type="SMR" id="B5YZF6"/>
<dbReference type="KEGG" id="ecf:ECH74115_0128"/>
<dbReference type="HOGENOM" id="CLU_048199_0_0_6"/>
<dbReference type="UniPathway" id="UPA00248">
    <property type="reaction ID" value="UER00314"/>
</dbReference>
<dbReference type="GO" id="GO:0005829">
    <property type="term" value="C:cytosol"/>
    <property type="evidence" value="ECO:0007669"/>
    <property type="project" value="TreeGrafter"/>
</dbReference>
<dbReference type="GO" id="GO:0004766">
    <property type="term" value="F:spermidine synthase activity"/>
    <property type="evidence" value="ECO:0007669"/>
    <property type="project" value="UniProtKB-UniRule"/>
</dbReference>
<dbReference type="GO" id="GO:0008295">
    <property type="term" value="P:spermidine biosynthetic process"/>
    <property type="evidence" value="ECO:0007669"/>
    <property type="project" value="UniProtKB-UniRule"/>
</dbReference>
<dbReference type="CDD" id="cd02440">
    <property type="entry name" value="AdoMet_MTases"/>
    <property type="match status" value="1"/>
</dbReference>
<dbReference type="FunFam" id="2.30.140.10:FF:000002">
    <property type="entry name" value="Polyamine aminopropyltransferase"/>
    <property type="match status" value="1"/>
</dbReference>
<dbReference type="FunFam" id="3.40.50.150:FF:000026">
    <property type="entry name" value="Polyamine aminopropyltransferase"/>
    <property type="match status" value="1"/>
</dbReference>
<dbReference type="Gene3D" id="2.30.140.10">
    <property type="entry name" value="Spermidine synthase, tetramerisation domain"/>
    <property type="match status" value="1"/>
</dbReference>
<dbReference type="Gene3D" id="3.40.50.150">
    <property type="entry name" value="Vaccinia Virus protein VP39"/>
    <property type="match status" value="1"/>
</dbReference>
<dbReference type="HAMAP" id="MF_00198">
    <property type="entry name" value="Spermidine_synth"/>
    <property type="match status" value="1"/>
</dbReference>
<dbReference type="InterPro" id="IPR030374">
    <property type="entry name" value="PABS"/>
</dbReference>
<dbReference type="InterPro" id="IPR030373">
    <property type="entry name" value="PABS_CS"/>
</dbReference>
<dbReference type="InterPro" id="IPR029063">
    <property type="entry name" value="SAM-dependent_MTases_sf"/>
</dbReference>
<dbReference type="InterPro" id="IPR001045">
    <property type="entry name" value="Spermi_synthase"/>
</dbReference>
<dbReference type="InterPro" id="IPR035246">
    <property type="entry name" value="Spermidine_synt_N"/>
</dbReference>
<dbReference type="InterPro" id="IPR037163">
    <property type="entry name" value="Spermidine_synt_N_sf"/>
</dbReference>
<dbReference type="NCBIfam" id="NF037959">
    <property type="entry name" value="MFS_SpdSyn"/>
    <property type="match status" value="1"/>
</dbReference>
<dbReference type="NCBIfam" id="NF002010">
    <property type="entry name" value="PRK00811.1"/>
    <property type="match status" value="1"/>
</dbReference>
<dbReference type="NCBIfam" id="TIGR00417">
    <property type="entry name" value="speE"/>
    <property type="match status" value="1"/>
</dbReference>
<dbReference type="PANTHER" id="PTHR11558:SF11">
    <property type="entry name" value="SPERMIDINE SYNTHASE"/>
    <property type="match status" value="1"/>
</dbReference>
<dbReference type="PANTHER" id="PTHR11558">
    <property type="entry name" value="SPERMIDINE/SPERMINE SYNTHASE"/>
    <property type="match status" value="1"/>
</dbReference>
<dbReference type="Pfam" id="PF17284">
    <property type="entry name" value="Spermine_synt_N"/>
    <property type="match status" value="1"/>
</dbReference>
<dbReference type="Pfam" id="PF01564">
    <property type="entry name" value="Spermine_synth"/>
    <property type="match status" value="1"/>
</dbReference>
<dbReference type="SUPFAM" id="SSF53335">
    <property type="entry name" value="S-adenosyl-L-methionine-dependent methyltransferases"/>
    <property type="match status" value="1"/>
</dbReference>
<dbReference type="PROSITE" id="PS01330">
    <property type="entry name" value="PABS_1"/>
    <property type="match status" value="1"/>
</dbReference>
<dbReference type="PROSITE" id="PS51006">
    <property type="entry name" value="PABS_2"/>
    <property type="match status" value="1"/>
</dbReference>
<evidence type="ECO:0000255" key="1">
    <source>
        <dbReference type="HAMAP-Rule" id="MF_00198"/>
    </source>
</evidence>
<protein>
    <recommendedName>
        <fullName evidence="1">Polyamine aminopropyltransferase</fullName>
    </recommendedName>
    <alternativeName>
        <fullName evidence="1">Putrescine aminopropyltransferase</fullName>
        <shortName evidence="1">PAPT</shortName>
    </alternativeName>
    <alternativeName>
        <fullName evidence="1">Spermidine synthase</fullName>
        <shortName evidence="1">SPDS</shortName>
        <shortName evidence="1">SPDSY</shortName>
        <ecNumber evidence="1">2.5.1.16</ecNumber>
    </alternativeName>
</protein>
<gene>
    <name evidence="1" type="primary">speE</name>
    <name type="ordered locus">ECH74115_0128</name>
</gene>